<protein>
    <recommendedName>
        <fullName>Sucrase-isomaltase, intestinal</fullName>
    </recommendedName>
    <component>
        <recommendedName>
            <fullName>Sucrase</fullName>
            <ecNumber>3.2.1.48</ecNumber>
        </recommendedName>
    </component>
    <component>
        <recommendedName>
            <fullName>Isomaltase</fullName>
            <ecNumber>3.2.1.10</ecNumber>
        </recommendedName>
    </component>
</protein>
<gene>
    <name type="primary">SI</name>
</gene>
<keyword id="KW-0002">3D-structure</keyword>
<keyword id="KW-1003">Cell membrane</keyword>
<keyword id="KW-0903">Direct protein sequencing</keyword>
<keyword id="KW-0225">Disease variant</keyword>
<keyword id="KW-1015">Disulfide bond</keyword>
<keyword id="KW-0325">Glycoprotein</keyword>
<keyword id="KW-0326">Glycosidase</keyword>
<keyword id="KW-0378">Hydrolase</keyword>
<keyword id="KW-0472">Membrane</keyword>
<keyword id="KW-0511">Multifunctional enzyme</keyword>
<keyword id="KW-0597">Phosphoprotein</keyword>
<keyword id="KW-1267">Proteomics identification</keyword>
<keyword id="KW-1185">Reference proteome</keyword>
<keyword id="KW-0677">Repeat</keyword>
<keyword id="KW-0735">Signal-anchor</keyword>
<keyword id="KW-0765">Sulfation</keyword>
<keyword id="KW-0812">Transmembrane</keyword>
<keyword id="KW-1133">Transmembrane helix</keyword>
<evidence type="ECO:0000250" key="1"/>
<evidence type="ECO:0000255" key="2"/>
<evidence type="ECO:0000255" key="3">
    <source>
        <dbReference type="PROSITE-ProRule" id="PRU00779"/>
    </source>
</evidence>
<evidence type="ECO:0000255" key="4">
    <source>
        <dbReference type="PROSITE-ProRule" id="PRU10066"/>
    </source>
</evidence>
<evidence type="ECO:0000256" key="5">
    <source>
        <dbReference type="SAM" id="MobiDB-lite"/>
    </source>
</evidence>
<evidence type="ECO:0000269" key="6">
    <source>
    </source>
</evidence>
<evidence type="ECO:0000269" key="7">
    <source>
    </source>
</evidence>
<evidence type="ECO:0000269" key="8">
    <source>
    </source>
</evidence>
<evidence type="ECO:0000269" key="9">
    <source>
    </source>
</evidence>
<evidence type="ECO:0000269" key="10">
    <source>
    </source>
</evidence>
<evidence type="ECO:0000269" key="11">
    <source>
    </source>
</evidence>
<evidence type="ECO:0000269" key="12">
    <source>
    </source>
</evidence>
<evidence type="ECO:0000269" key="13">
    <source>
    </source>
</evidence>
<evidence type="ECO:0000269" key="14">
    <source>
    </source>
</evidence>
<evidence type="ECO:0000269" key="15">
    <source>
    </source>
</evidence>
<evidence type="ECO:0000269" key="16">
    <source>
    </source>
</evidence>
<evidence type="ECO:0000305" key="17"/>
<evidence type="ECO:0007829" key="18">
    <source>
        <dbReference type="PDB" id="3LPO"/>
    </source>
</evidence>
<evidence type="ECO:0007829" key="19">
    <source>
        <dbReference type="PDB" id="3LPP"/>
    </source>
</evidence>
<organism>
    <name type="scientific">Homo sapiens</name>
    <name type="common">Human</name>
    <dbReference type="NCBI Taxonomy" id="9606"/>
    <lineage>
        <taxon>Eukaryota</taxon>
        <taxon>Metazoa</taxon>
        <taxon>Chordata</taxon>
        <taxon>Craniata</taxon>
        <taxon>Vertebrata</taxon>
        <taxon>Euteleostomi</taxon>
        <taxon>Mammalia</taxon>
        <taxon>Eutheria</taxon>
        <taxon>Euarchontoglires</taxon>
        <taxon>Primates</taxon>
        <taxon>Haplorrhini</taxon>
        <taxon>Catarrhini</taxon>
        <taxon>Hominidae</taxon>
        <taxon>Homo</taxon>
    </lineage>
</organism>
<proteinExistence type="evidence at protein level"/>
<sequence length="1827" mass="209453">MARKKFSGLEISLIVLFVIVTIIAIALIVVLATKTPAVDEISDSTSTPATTRVTTNPSDSGKCPNVLNDPVNVRINCIPEQFPTEGICAQRGCCWRPWNDSLIPWCFFVDNHGYNVQDMTTTSIGVEAKLNRIPSPTLFGNDINSVLFTTQNQTPNRFRFKITDPNNRRYEVPHQYVKEFTGPTVSDTLYDVKVAQNPFSIQVIRKSNGKTLFDTSIGPLVYSDQYLQISTRLPSDYIYGIGEQVHKRFRHDLSWKTWPIFTRDQLPGDNNNNLYGHQTFFMCIEDTSGKSFGVFLMNSNAMEIFIQPTPIVTYRVTGGILDFYILLGDTPEQVVQQYQQLVGLPAMPAYWNLGFQLSRWNYKSLDVVKEVVRRNREAGIPFDTQVTDIDYMEDKKDFTYDQVAFNGLPQFVQDLHDHGQKYVIILDPAISIGRRANGTTYATYERGNTQHVWINESDGSTPIIGEVWPGLTVYPDFTNPNCIDWWANECSIFHQEVQYDGLWIDMNEVSSFIQGSTKGCNVNKLNYPPFTPDILDKLMYSKTICMDAVQNWGKQYDVHSLYGYSMAIATEQAVQKVFPNKRSFILTRSTFAGSGRHAAHWLGDNTASWEQMEWSITGMLEFSLFGIPLVGADICGFVAETTEELCRRWMQLGAFYPFSRNHNSDGYEHQDPAFFGQNSLLVKSSRQYLTIRYTLLPFLYTLFYKAHVFGETVARPVLHEFYEDTNSWIEDTEFLWGPALLITPVLKQGADTVSAYIPDAIWYDYESGAKRPWRKQRVDMYLPADKIGLHLRGGYIIPIQEPDVTTTASRKNPLGLIVALGENNTAKGDFFWDDGETKDTIQNGNYILYTFSVSNNTLDIVCTHSSYQEGTTLAFQTVKILGLTDSVTEVRVAENNQPMNAHSNFTYDASNQVLLIADLKLNLGRNFSVQWNQIFSENERFNCYPDADLATEQKCTQRGCVWRTGSSLSKAPECYFPRQDNSYSVNSARYSSMGITADLQLNTANARIKLPSDPISTLRVEVKYHKNDMLQFKIYDPQKKRYEVPVPLNIPTTPISTYEDRLYDVEIKENPFGIQIRRRSSGRVIWDSWLPGFAFNDQFIQISTRLPSEYIYGFGEVEHTAFKRDLNWNTWGMFTRDQPPGYKLNSYGFHPYYMALEEEGNAHGVFLLNSNAMDVTFQPTPALTYRTVGGILDFYMFLGPTPEVATKQYHEVIGHPVMPAYWALGFQLCRYGYANTSEVRELYDAMVAANIPYDVQYTDIDYMERQLDFTIGEAFQDLPQFVDKIRGEGMRYIIILDPAISGNETKTYPAFERGQQNDVFVKWPNTNDICWAKVWPDLPNITIDKTLTEDEAVNASRAHVAFPDFFRTSTAEWWAREIVDFYNEKMKFDGLWIDMNEPSSFVNGTTTNQCRNDELNYPPYFPELTKRTDGLHFRTICMEAEQILSDGTSVLHYDVHNLYGWSQMKPTHDALQKTTGKRGIVISRSTYPTSGRWGGHWLGDNYARWDNMDKSIIGMMEFSLFGMSYTGADICGFFNNSEYHLCTRWMQLGAFYPYSRNHNIANTRRQDPASWNETFAEMSRNILNIRYTLLPYFYTQMHEIHANGGTVIRPLLHEFFDEKPTWDIFKQFLWGPAFMVTPVLEPYVQTVNAYVPNARWFDYHTGKDIGVRGQFQTFNASYDTINLHVRGGHILPCQEPAQNTFYSRQKHMKLIVAADDNQMAQGSLFWDDGESIDTYERDLYLSVQFNLNQTTLTSTILKRGYINKSETRLGSLHVWGKGTTPVNAVTLTYNGNKNSLPFNEDTTNMILRIDLTTHNVTLEEPIEINWS</sequence>
<feature type="initiator methionine" description="Removed" evidence="12">
    <location>
        <position position="1"/>
    </location>
</feature>
<feature type="chain" id="PRO_0000018551" description="Sucrase-isomaltase, intestinal">
    <location>
        <begin position="2"/>
        <end position="1827"/>
    </location>
</feature>
<feature type="chain" id="PRO_0000018552" description="Isomaltase">
    <location>
        <begin position="2"/>
        <end position="1007"/>
    </location>
</feature>
<feature type="chain" id="PRO_0000018553" description="Sucrase">
    <location>
        <begin position="1008"/>
        <end position="1827"/>
    </location>
</feature>
<feature type="topological domain" description="Cytoplasmic">
    <location>
        <begin position="2"/>
        <end position="12"/>
    </location>
</feature>
<feature type="transmembrane region" description="Helical; Signal-anchor for type II membrane protein" evidence="2">
    <location>
        <begin position="13"/>
        <end position="32"/>
    </location>
</feature>
<feature type="topological domain" description="Lumenal">
    <location>
        <begin position="33"/>
        <end position="1827"/>
    </location>
</feature>
<feature type="domain" description="P-type 1" evidence="3">
    <location>
        <begin position="61"/>
        <end position="110"/>
    </location>
</feature>
<feature type="domain" description="P-type 2" evidence="3">
    <location>
        <begin position="932"/>
        <end position="978"/>
    </location>
</feature>
<feature type="region of interest" description="Disordered" evidence="5">
    <location>
        <begin position="40"/>
        <end position="61"/>
    </location>
</feature>
<feature type="region of interest" description="Isomaltase">
    <location>
        <begin position="110"/>
        <end position="1007"/>
    </location>
</feature>
<feature type="region of interest" description="Sucrase">
    <location>
        <begin position="1008"/>
        <end position="1827"/>
    </location>
</feature>
<feature type="compositionally biased region" description="Low complexity" evidence="5">
    <location>
        <begin position="45"/>
        <end position="55"/>
    </location>
</feature>
<feature type="active site" description="Nucleophile; for isomaltase activity" evidence="4 13">
    <location>
        <position position="505"/>
    </location>
</feature>
<feature type="active site" description="For isomaltase activity" evidence="13">
    <location>
        <position position="604"/>
    </location>
</feature>
<feature type="active site" description="Nucleophile; for sucrase activity" evidence="4 13">
    <location>
        <position position="1394"/>
    </location>
</feature>
<feature type="active site" description="For sucrase activity" evidence="1">
    <location>
        <position position="1397"/>
    </location>
</feature>
<feature type="active site" description="Proton donor; for isomaltase activity" evidence="1">
    <location>
        <position position="1500"/>
    </location>
</feature>
<feature type="binding site">
    <location>
        <position position="264"/>
    </location>
    <ligand>
        <name>substrate</name>
    </ligand>
</feature>
<feature type="binding site">
    <location>
        <position position="388"/>
    </location>
    <ligand>
        <name>substrate</name>
    </ligand>
</feature>
<feature type="binding site">
    <location>
        <position position="588"/>
    </location>
    <ligand>
        <name>substrate</name>
    </ligand>
</feature>
<feature type="binding site">
    <location>
        <position position="662"/>
    </location>
    <ligand>
        <name>substrate</name>
    </ligand>
</feature>
<feature type="modified residue" description="Phosphoserine; by PKA" evidence="15">
    <location>
        <position position="7"/>
    </location>
</feature>
<feature type="modified residue" description="Sulfotyrosine" evidence="2">
    <location>
        <position position="237"/>
    </location>
</feature>
<feature type="modified residue" description="Sulfotyrosine" evidence="2">
    <location>
        <position position="239"/>
    </location>
</feature>
<feature type="modified residue" description="Sulfotyrosine" evidence="2">
    <location>
        <position position="391"/>
    </location>
</feature>
<feature type="modified residue" description="Sulfotyrosine" evidence="2">
    <location>
        <position position="400"/>
    </location>
</feature>
<feature type="modified residue" description="Sulfotyrosine" evidence="2">
    <location>
        <position position="667"/>
    </location>
</feature>
<feature type="modified residue" description="Sulfotyrosine" evidence="2">
    <location>
        <position position="763"/>
    </location>
</feature>
<feature type="modified residue" description="Sulfotyrosine" evidence="2">
    <location>
        <position position="765"/>
    </location>
</feature>
<feature type="glycosylation site" description="N-linked (GlcNAc...) asparagine" evidence="13">
    <location>
        <position position="99"/>
    </location>
</feature>
<feature type="glycosylation site" description="N-linked (GlcNAc...) asparagine" evidence="2">
    <location>
        <position position="437"/>
    </location>
</feature>
<feature type="glycosylation site" description="N-linked (GlcNAc...) asparagine" evidence="13">
    <location>
        <position position="455"/>
    </location>
</feature>
<feature type="glycosylation site" description="N-linked (GlcNAc...) asparagine" evidence="2">
    <location>
        <position position="823"/>
    </location>
</feature>
<feature type="glycosylation site" description="N-linked (GlcNAc...) asparagine" evidence="13">
    <location>
        <position position="855"/>
    </location>
</feature>
<feature type="glycosylation site" description="N-linked (GlcNAc...) asparagine" evidence="13">
    <location>
        <position position="904"/>
    </location>
</feature>
<feature type="glycosylation site" description="N-linked (GlcNAc...) asparagine" evidence="2">
    <location>
        <position position="926"/>
    </location>
</feature>
<feature type="glycosylation site" description="N-linked (GlcNAc...) asparagine" evidence="2">
    <location>
        <position position="1235"/>
    </location>
</feature>
<feature type="glycosylation site" description="N-linked (GlcNAc...) asparagine" evidence="2">
    <location>
        <position position="1303"/>
    </location>
</feature>
<feature type="glycosylation site" description="N-linked (GlcNAc...) asparagine" evidence="2">
    <location>
        <position position="1340"/>
    </location>
</feature>
<feature type="glycosylation site" description="N-linked (GlcNAc...) asparagine" evidence="2">
    <location>
        <position position="1354"/>
    </location>
</feature>
<feature type="glycosylation site" description="N-linked (GlcNAc...) asparagine" evidence="2">
    <location>
        <position position="1403"/>
    </location>
</feature>
<feature type="glycosylation site" description="N-linked (GlcNAc...) asparagine" evidence="2">
    <location>
        <position position="1535"/>
    </location>
</feature>
<feature type="glycosylation site" description="N-linked (GlcNAc...) asparagine" evidence="2">
    <location>
        <position position="1572"/>
    </location>
</feature>
<feature type="glycosylation site" description="N-linked (GlcNAc...) asparagine" evidence="2">
    <location>
        <position position="1675"/>
    </location>
</feature>
<feature type="glycosylation site" description="N-linked (GlcNAc...) asparagine" evidence="2">
    <location>
        <position position="1748"/>
    </location>
</feature>
<feature type="glycosylation site" description="N-linked (GlcNAc...) asparagine" evidence="2">
    <location>
        <position position="1763"/>
    </location>
</feature>
<feature type="glycosylation site" description="N-linked (GlcNAc...) asparagine" evidence="2">
    <location>
        <position position="1815"/>
    </location>
</feature>
<feature type="disulfide bond" evidence="3 13">
    <location>
        <begin position="63"/>
        <end position="94"/>
    </location>
</feature>
<feature type="disulfide bond" evidence="3 13">
    <location>
        <begin position="77"/>
        <end position="93"/>
    </location>
</feature>
<feature type="disulfide bond" evidence="3 13">
    <location>
        <begin position="88"/>
        <end position="106"/>
    </location>
</feature>
<feature type="disulfide bond" evidence="3 13">
    <location>
        <begin position="520"/>
        <end position="545"/>
    </location>
</feature>
<feature type="disulfide bond" evidence="3 13">
    <location>
        <begin position="635"/>
        <end position="646"/>
    </location>
</feature>
<feature type="sequence variant" id="VAR_025367" description="In dbSNP:rs9290264." evidence="9 10 11 12">
    <original>V</original>
    <variation>F</variation>
    <location>
        <position position="15"/>
    </location>
</feature>
<feature type="sequence variant" id="VAR_025368" description="In CSID; missorting of the enzyme to the basolateral membrane; dbSNP:rs121912612." evidence="7">
    <original>Q</original>
    <variation>R</variation>
    <location>
        <position position="117"/>
    </location>
</feature>
<feature type="sequence variant" id="VAR_025369" description="In dbSNP:rs9283633." evidence="8 9 10 11 14">
    <original>T</original>
    <variation>A</variation>
    <location>
        <position position="231"/>
    </location>
</feature>
<feature type="sequence variant" id="VAR_025370" description="In CSID; causes loss of anchored SI from the membrane; dbSNP:rs267607049." evidence="6">
    <original>L</original>
    <variation>P</variation>
    <location>
        <position position="341"/>
    </location>
</feature>
<feature type="sequence variant" id="VAR_025371" description="In CSID; dbSNP:rs121912615." evidence="11">
    <original>V</original>
    <variation>G</variation>
    <location>
        <position position="577"/>
    </location>
</feature>
<feature type="sequence variant" id="VAR_025372" description="In CSID; dbSNP:rs765433197." evidence="11">
    <original>S</original>
    <variation>P</variation>
    <location>
        <position position="594"/>
    </location>
</feature>
<feature type="sequence variant" id="VAR_025373" description="In CSID; SI accumulates predominantly in the ER; dbSNP:rs121912613." evidence="9">
    <original>L</original>
    <variation>P</variation>
    <location>
        <position position="620"/>
    </location>
</feature>
<feature type="sequence variant" id="VAR_025374" description="In CSID." evidence="11">
    <original>T</original>
    <variation>P</variation>
    <location>
        <position position="694"/>
    </location>
</feature>
<feature type="sequence variant" id="VAR_025375" description="In CSID; dbSNP:rs121912616." evidence="11">
    <original>G</original>
    <variation>D</variation>
    <location>
        <position position="1073"/>
    </location>
</feature>
<feature type="sequence variant" id="VAR_007854" description="In CSID; exhibits intracellular accumulation of mannose-rich SI in the Golgi; dbSNP:rs121912611." evidence="16">
    <original>Q</original>
    <variation>P</variation>
    <location>
        <position position="1098"/>
    </location>
</feature>
<feature type="sequence variant" id="VAR_025376" description="In CSID; dbSNP:rs121912614." evidence="11">
    <original>C</original>
    <variation>Y</variation>
    <location>
        <position position="1229"/>
    </location>
</feature>
<feature type="sequence variant" id="VAR_025377" description="In CSID; dbSNP:rs143388292." evidence="11">
    <original>R</original>
    <variation>G</variation>
    <location>
        <position position="1367"/>
    </location>
</feature>
<feature type="sequence variant" id="VAR_025378" description="In dbSNP:rs4855271." evidence="8 10 11">
    <original>M</original>
    <variation>I</variation>
    <location>
        <position position="1523"/>
    </location>
</feature>
<feature type="sequence variant" id="VAR_025379" description="In CSID; dbSNP:rs79717168." evidence="11">
    <original>F</original>
    <variation>C</variation>
    <location>
        <position position="1745"/>
    </location>
</feature>
<feature type="sequence variant" id="VAR_034522" description="In dbSNP:rs9917722.">
    <original>T</original>
    <variation>S</variation>
    <location>
        <position position="1802"/>
    </location>
</feature>
<feature type="sequence conflict" description="In Ref. 3; AAI16453." evidence="17" ref="3">
    <original>N</original>
    <variation>D</variation>
    <location>
        <position position="300"/>
    </location>
</feature>
<feature type="sequence conflict" description="In Ref. 3; AAI15035." evidence="17" ref="3">
    <original>S</original>
    <variation>I</variation>
    <location>
        <position position="460"/>
    </location>
</feature>
<feature type="sequence conflict" description="In Ref. 3; AAI15035." evidence="17" ref="3">
    <original>P</original>
    <variation>S</variation>
    <location>
        <position position="475"/>
    </location>
</feature>
<feature type="sequence conflict" description="In Ref. 3; AAI16453." evidence="17" ref="3">
    <original>A</original>
    <variation>V</variation>
    <location>
        <position position="548"/>
    </location>
</feature>
<feature type="sequence conflict" description="In Ref. 3; AAI15035." evidence="17" ref="3">
    <original>F</original>
    <variation>L</variation>
    <location>
        <position position="584"/>
    </location>
</feature>
<feature type="sequence conflict" description="In Ref. 3; AAI15035." evidence="17" ref="3">
    <original>R</original>
    <variation>C</variation>
    <location>
        <position position="588"/>
    </location>
</feature>
<feature type="sequence conflict" description="In Ref. 3; AAI15035." evidence="17" ref="3">
    <original>D</original>
    <variation>A</variation>
    <location>
        <position position="633"/>
    </location>
</feature>
<feature type="sequence conflict" description="In Ref. 3; AAI16453." evidence="17" ref="3">
    <original>Q</original>
    <variation>R</variation>
    <location>
        <position position="687"/>
    </location>
</feature>
<feature type="sequence conflict" description="In Ref. 3; AAI15035." evidence="17" ref="3">
    <original>T</original>
    <variation>A</variation>
    <location>
        <position position="884"/>
    </location>
</feature>
<feature type="sequence conflict" description="In Ref. 5; AA sequence." evidence="17" ref="5">
    <original>S</original>
    <variation>E</variation>
    <location>
        <position position="1016"/>
    </location>
</feature>
<feature type="sequence conflict" description="In Ref. 5; AA sequence." evidence="17" ref="5">
    <original>V</original>
    <variation>T</variation>
    <location>
        <position position="1022"/>
    </location>
</feature>
<feature type="sequence conflict" description="In Ref. 3; AAI15035." evidence="17" ref="3">
    <original>A</original>
    <variation>V</variation>
    <location>
        <position position="1155"/>
    </location>
</feature>
<feature type="sequence conflict" description="In Ref. 1; CAA45140." evidence="17" ref="1">
    <original>E</original>
    <variation>Q</variation>
    <location>
        <position position="1203"/>
    </location>
</feature>
<feature type="sequence conflict" description="In Ref. 3; AAI15035." evidence="17" ref="3">
    <original>V</original>
    <variation>I</variation>
    <location>
        <position position="1782"/>
    </location>
</feature>
<feature type="sequence conflict" description="In Ref. 3; AAI16453." evidence="17" ref="3">
    <original>N</original>
    <variation>S</variation>
    <location>
        <position position="1825"/>
    </location>
</feature>
<feature type="strand" evidence="19">
    <location>
        <begin position="65"/>
        <end position="68"/>
    </location>
</feature>
<feature type="helix" evidence="19">
    <location>
        <begin position="71"/>
        <end position="73"/>
    </location>
</feature>
<feature type="strand" evidence="18">
    <location>
        <begin position="75"/>
        <end position="77"/>
    </location>
</feature>
<feature type="helix" evidence="19">
    <location>
        <begin position="85"/>
        <end position="91"/>
    </location>
</feature>
<feature type="strand" evidence="19">
    <location>
        <begin position="99"/>
        <end position="103"/>
    </location>
</feature>
<feature type="strand" evidence="19">
    <location>
        <begin position="105"/>
        <end position="107"/>
    </location>
</feature>
<feature type="strand" evidence="19">
    <location>
        <begin position="114"/>
        <end position="121"/>
    </location>
</feature>
<feature type="strand" evidence="19">
    <location>
        <begin position="123"/>
        <end position="132"/>
    </location>
</feature>
<feature type="strand" evidence="19">
    <location>
        <begin position="138"/>
        <end position="140"/>
    </location>
</feature>
<feature type="strand" evidence="19">
    <location>
        <begin position="144"/>
        <end position="154"/>
    </location>
</feature>
<feature type="strand" evidence="19">
    <location>
        <begin position="157"/>
        <end position="163"/>
    </location>
</feature>
<feature type="strand" evidence="19">
    <location>
        <begin position="175"/>
        <end position="177"/>
    </location>
</feature>
<feature type="strand" evidence="19">
    <location>
        <begin position="189"/>
        <end position="195"/>
    </location>
</feature>
<feature type="turn" evidence="19">
    <location>
        <begin position="196"/>
        <end position="199"/>
    </location>
</feature>
<feature type="strand" evidence="19">
    <location>
        <begin position="200"/>
        <end position="205"/>
    </location>
</feature>
<feature type="turn" evidence="19">
    <location>
        <begin position="206"/>
        <end position="209"/>
    </location>
</feature>
<feature type="strand" evidence="19">
    <location>
        <begin position="210"/>
        <end position="214"/>
    </location>
</feature>
<feature type="helix" evidence="19">
    <location>
        <begin position="215"/>
        <end position="217"/>
    </location>
</feature>
<feature type="strand" evidence="19">
    <location>
        <begin position="221"/>
        <end position="223"/>
    </location>
</feature>
<feature type="strand" evidence="19">
    <location>
        <begin position="226"/>
        <end position="232"/>
    </location>
</feature>
<feature type="strand" evidence="19">
    <location>
        <begin position="234"/>
        <end position="236"/>
    </location>
</feature>
<feature type="strand" evidence="19">
    <location>
        <begin position="238"/>
        <end position="244"/>
    </location>
</feature>
<feature type="strand" evidence="19">
    <location>
        <begin position="247"/>
        <end position="250"/>
    </location>
</feature>
<feature type="strand" evidence="19">
    <location>
        <begin position="254"/>
        <end position="261"/>
    </location>
</feature>
<feature type="strand" evidence="19">
    <location>
        <begin position="278"/>
        <end position="284"/>
    </location>
</feature>
<feature type="strand" evidence="19">
    <location>
        <begin position="291"/>
        <end position="296"/>
    </location>
</feature>
<feature type="strand" evidence="19">
    <location>
        <begin position="302"/>
        <end position="307"/>
    </location>
</feature>
<feature type="turn" evidence="19">
    <location>
        <begin position="308"/>
        <end position="310"/>
    </location>
</feature>
<feature type="strand" evidence="19">
    <location>
        <begin position="311"/>
        <end position="319"/>
    </location>
</feature>
<feature type="strand" evidence="19">
    <location>
        <begin position="321"/>
        <end position="330"/>
    </location>
</feature>
<feature type="helix" evidence="19">
    <location>
        <begin position="331"/>
        <end position="342"/>
    </location>
</feature>
<feature type="helix" evidence="19">
    <location>
        <begin position="350"/>
        <end position="353"/>
    </location>
</feature>
<feature type="helix" evidence="19">
    <location>
        <begin position="365"/>
        <end position="377"/>
    </location>
</feature>
<feature type="strand" evidence="19">
    <location>
        <begin position="384"/>
        <end position="387"/>
    </location>
</feature>
<feature type="helix" evidence="19">
    <location>
        <begin position="389"/>
        <end position="391"/>
    </location>
</feature>
<feature type="helix" evidence="18">
    <location>
        <begin position="393"/>
        <end position="395"/>
    </location>
</feature>
<feature type="turn" evidence="19">
    <location>
        <begin position="402"/>
        <end position="407"/>
    </location>
</feature>
<feature type="helix" evidence="19">
    <location>
        <begin position="408"/>
        <end position="417"/>
    </location>
</feature>
<feature type="strand" evidence="19">
    <location>
        <begin position="421"/>
        <end position="426"/>
    </location>
</feature>
<feature type="helix" evidence="19">
    <location>
        <begin position="442"/>
        <end position="450"/>
    </location>
</feature>
<feature type="strand" evidence="19">
    <location>
        <begin position="459"/>
        <end position="462"/>
    </location>
</feature>
<feature type="strand" evidence="19">
    <location>
        <begin position="465"/>
        <end position="467"/>
    </location>
</feature>
<feature type="strand" evidence="19">
    <location>
        <begin position="470"/>
        <end position="473"/>
    </location>
</feature>
<feature type="helix" evidence="19">
    <location>
        <begin position="480"/>
        <end position="496"/>
    </location>
</feature>
<feature type="strand" evidence="19">
    <location>
        <begin position="500"/>
        <end position="504"/>
    </location>
</feature>
<feature type="turn" evidence="19">
    <location>
        <begin position="507"/>
        <end position="509"/>
    </location>
</feature>
<feature type="strand" evidence="19">
    <location>
        <begin position="512"/>
        <end position="515"/>
    </location>
</feature>
<feature type="turn" evidence="19">
    <location>
        <begin position="524"/>
        <end position="526"/>
    </location>
</feature>
<feature type="helix" evidence="19">
    <location>
        <begin position="535"/>
        <end position="537"/>
    </location>
</feature>
<feature type="turn" evidence="19">
    <location>
        <begin position="539"/>
        <end position="542"/>
    </location>
</feature>
<feature type="helix" evidence="19">
    <location>
        <begin position="555"/>
        <end position="558"/>
    </location>
</feature>
<feature type="helix" evidence="19">
    <location>
        <begin position="559"/>
        <end position="561"/>
    </location>
</feature>
<feature type="helix" evidence="19">
    <location>
        <begin position="562"/>
        <end position="577"/>
    </location>
</feature>
<feature type="strand" evidence="19">
    <location>
        <begin position="585"/>
        <end position="588"/>
    </location>
</feature>
<feature type="helix" evidence="19">
    <location>
        <begin position="594"/>
        <end position="596"/>
    </location>
</feature>
<feature type="strand" evidence="19">
    <location>
        <begin position="599"/>
        <end position="601"/>
    </location>
</feature>
<feature type="strand" evidence="19">
    <location>
        <begin position="606"/>
        <end position="608"/>
    </location>
</feature>
<feature type="helix" evidence="19">
    <location>
        <begin position="609"/>
        <end position="624"/>
    </location>
</feature>
<feature type="strand" evidence="19">
    <location>
        <begin position="629"/>
        <end position="631"/>
    </location>
</feature>
<feature type="strand" evidence="19">
    <location>
        <begin position="637"/>
        <end position="639"/>
    </location>
</feature>
<feature type="helix" evidence="19">
    <location>
        <begin position="643"/>
        <end position="653"/>
    </location>
</feature>
<feature type="strand" evidence="19">
    <location>
        <begin position="656"/>
        <end position="658"/>
    </location>
</feature>
<feature type="helix" evidence="19">
    <location>
        <begin position="672"/>
        <end position="675"/>
    </location>
</feature>
<feature type="helix" evidence="19">
    <location>
        <begin position="680"/>
        <end position="694"/>
    </location>
</feature>
<feature type="helix" evidence="19">
    <location>
        <begin position="696"/>
        <end position="709"/>
    </location>
</feature>
<feature type="strand" evidence="19">
    <location>
        <begin position="713"/>
        <end position="715"/>
    </location>
</feature>
<feature type="helix" evidence="19">
    <location>
        <begin position="718"/>
        <end position="721"/>
    </location>
</feature>
<feature type="helix" evidence="19">
    <location>
        <begin position="725"/>
        <end position="729"/>
    </location>
</feature>
<feature type="strand" evidence="19">
    <location>
        <begin position="732"/>
        <end position="736"/>
    </location>
</feature>
<feature type="turn" evidence="19">
    <location>
        <begin position="737"/>
        <end position="739"/>
    </location>
</feature>
<feature type="strand" evidence="19">
    <location>
        <begin position="740"/>
        <end position="743"/>
    </location>
</feature>
<feature type="strand" evidence="19">
    <location>
        <begin position="751"/>
        <end position="757"/>
    </location>
</feature>
<feature type="strand" evidence="19">
    <location>
        <begin position="762"/>
        <end position="764"/>
    </location>
</feature>
<feature type="turn" evidence="19">
    <location>
        <begin position="765"/>
        <end position="767"/>
    </location>
</feature>
<feature type="strand" evidence="19">
    <location>
        <begin position="775"/>
        <end position="781"/>
    </location>
</feature>
<feature type="strand" evidence="19">
    <location>
        <begin position="788"/>
        <end position="792"/>
    </location>
</feature>
<feature type="strand" evidence="19">
    <location>
        <begin position="795"/>
        <end position="800"/>
    </location>
</feature>
<feature type="helix" evidence="19">
    <location>
        <begin position="806"/>
        <end position="809"/>
    </location>
</feature>
<feature type="strand" evidence="19">
    <location>
        <begin position="814"/>
        <end position="819"/>
    </location>
</feature>
<feature type="strand" evidence="19">
    <location>
        <begin position="824"/>
        <end position="832"/>
    </location>
</feature>
<feature type="strand" evidence="19">
    <location>
        <begin position="835"/>
        <end position="837"/>
    </location>
</feature>
<feature type="helix" evidence="19">
    <location>
        <begin position="840"/>
        <end position="843"/>
    </location>
</feature>
<feature type="strand" evidence="19">
    <location>
        <begin position="846"/>
        <end position="854"/>
    </location>
</feature>
<feature type="strand" evidence="19">
    <location>
        <begin position="857"/>
        <end position="865"/>
    </location>
</feature>
<feature type="helix" evidence="19">
    <location>
        <begin position="868"/>
        <end position="872"/>
    </location>
</feature>
<feature type="strand" evidence="19">
    <location>
        <begin position="874"/>
        <end position="882"/>
    </location>
</feature>
<feature type="strand" evidence="19">
    <location>
        <begin position="890"/>
        <end position="894"/>
    </location>
</feature>
<feature type="strand" evidence="19">
    <location>
        <begin position="900"/>
        <end position="902"/>
    </location>
</feature>
<feature type="strand" evidence="19">
    <location>
        <begin position="905"/>
        <end position="908"/>
    </location>
</feature>
<feature type="turn" evidence="19">
    <location>
        <begin position="909"/>
        <end position="912"/>
    </location>
</feature>
<feature type="strand" evidence="19">
    <location>
        <begin position="913"/>
        <end position="916"/>
    </location>
</feature>
<feature type="strand" evidence="19">
    <location>
        <begin position="927"/>
        <end position="930"/>
    </location>
</feature>
<dbReference type="EC" id="3.2.1.48"/>
<dbReference type="EC" id="3.2.1.10"/>
<dbReference type="EMBL" id="X63597">
    <property type="protein sequence ID" value="CAA45140.1"/>
    <property type="molecule type" value="mRNA"/>
</dbReference>
<dbReference type="EMBL" id="AC092695">
    <property type="status" value="NOT_ANNOTATED_CDS"/>
    <property type="molecule type" value="Genomic_DNA"/>
</dbReference>
<dbReference type="EMBL" id="AC140119">
    <property type="status" value="NOT_ANNOTATED_CDS"/>
    <property type="molecule type" value="Genomic_DNA"/>
</dbReference>
<dbReference type="EMBL" id="AC144561">
    <property type="status" value="NOT_ANNOTATED_CDS"/>
    <property type="molecule type" value="Genomic_DNA"/>
</dbReference>
<dbReference type="EMBL" id="BC115034">
    <property type="protein sequence ID" value="AAI15035.1"/>
    <property type="molecule type" value="mRNA"/>
</dbReference>
<dbReference type="EMBL" id="BC116452">
    <property type="protein sequence ID" value="AAI16453.1"/>
    <property type="molecule type" value="mRNA"/>
</dbReference>
<dbReference type="EMBL" id="BC132834">
    <property type="protein sequence ID" value="AAI32835.1"/>
    <property type="molecule type" value="mRNA"/>
</dbReference>
<dbReference type="EMBL" id="BC132860">
    <property type="protein sequence ID" value="AAI32861.1"/>
    <property type="molecule type" value="mRNA"/>
</dbReference>
<dbReference type="EMBL" id="M22616">
    <property type="protein sequence ID" value="AAA60551.1"/>
    <property type="molecule type" value="mRNA"/>
</dbReference>
<dbReference type="CCDS" id="CCDS3196.1"/>
<dbReference type="PIR" id="S36082">
    <property type="entry name" value="UUHU"/>
</dbReference>
<dbReference type="RefSeq" id="NP_001032.2">
    <property type="nucleotide sequence ID" value="NM_001041.4"/>
</dbReference>
<dbReference type="RefSeq" id="XP_047304691.1">
    <property type="nucleotide sequence ID" value="XM_047448735.1"/>
</dbReference>
<dbReference type="RefSeq" id="XP_047304692.1">
    <property type="nucleotide sequence ID" value="XM_047448736.1"/>
</dbReference>
<dbReference type="PDB" id="3LPO">
    <property type="method" value="X-ray"/>
    <property type="resolution" value="3.20 A"/>
    <property type="chains" value="A/B/C/D=62-931"/>
</dbReference>
<dbReference type="PDB" id="3LPP">
    <property type="method" value="X-ray"/>
    <property type="resolution" value="2.15 A"/>
    <property type="chains" value="A/B/C/D=62-931"/>
</dbReference>
<dbReference type="PDBsum" id="3LPO"/>
<dbReference type="PDBsum" id="3LPP"/>
<dbReference type="SMR" id="P14410"/>
<dbReference type="BioGRID" id="112371">
    <property type="interactions" value="4"/>
</dbReference>
<dbReference type="FunCoup" id="P14410">
    <property type="interactions" value="87"/>
</dbReference>
<dbReference type="IntAct" id="P14410">
    <property type="interactions" value="3"/>
</dbReference>
<dbReference type="MINT" id="P14410"/>
<dbReference type="STRING" id="9606.ENSP00000264382"/>
<dbReference type="BindingDB" id="P14410"/>
<dbReference type="ChEMBL" id="CHEMBL2748"/>
<dbReference type="DrugBank" id="DB00284">
    <property type="generic name" value="Acarbose"/>
</dbReference>
<dbReference type="DrugBank" id="DB00747">
    <property type="generic name" value="Scopolamine"/>
</dbReference>
<dbReference type="DrugCentral" id="P14410"/>
<dbReference type="CAZy" id="GH31">
    <property type="family name" value="Glycoside Hydrolase Family 31"/>
</dbReference>
<dbReference type="GlyCosmos" id="P14410">
    <property type="glycosylation" value="18 sites, No reported glycans"/>
</dbReference>
<dbReference type="GlyGen" id="P14410">
    <property type="glycosylation" value="24 sites, 2 N-linked glycans (1 site), 1 O-linked glycan (1 site)"/>
</dbReference>
<dbReference type="iPTMnet" id="P14410"/>
<dbReference type="PhosphoSitePlus" id="P14410"/>
<dbReference type="BioMuta" id="SI"/>
<dbReference type="DMDM" id="317373594"/>
<dbReference type="jPOST" id="P14410"/>
<dbReference type="MassIVE" id="P14410"/>
<dbReference type="PaxDb" id="9606-ENSP00000264382"/>
<dbReference type="PeptideAtlas" id="P14410"/>
<dbReference type="ProteomicsDB" id="53051"/>
<dbReference type="Antibodypedia" id="2270">
    <property type="antibodies" value="101 antibodies from 22 providers"/>
</dbReference>
<dbReference type="DNASU" id="6476"/>
<dbReference type="Ensembl" id="ENST00000264382.8">
    <property type="protein sequence ID" value="ENSP00000264382.3"/>
    <property type="gene ID" value="ENSG00000090402.8"/>
</dbReference>
<dbReference type="GeneID" id="6476"/>
<dbReference type="KEGG" id="hsa:6476"/>
<dbReference type="MANE-Select" id="ENST00000264382.8">
    <property type="protein sequence ID" value="ENSP00000264382.3"/>
    <property type="RefSeq nucleotide sequence ID" value="NM_001041.4"/>
    <property type="RefSeq protein sequence ID" value="NP_001032.2"/>
</dbReference>
<dbReference type="UCSC" id="uc003fei.3">
    <property type="organism name" value="human"/>
</dbReference>
<dbReference type="AGR" id="HGNC:10856"/>
<dbReference type="CTD" id="6476"/>
<dbReference type="DisGeNET" id="6476"/>
<dbReference type="GeneCards" id="SI"/>
<dbReference type="HGNC" id="HGNC:10856">
    <property type="gene designation" value="SI"/>
</dbReference>
<dbReference type="HPA" id="ENSG00000090402">
    <property type="expression patterns" value="Tissue enriched (intestine)"/>
</dbReference>
<dbReference type="MalaCards" id="SI"/>
<dbReference type="MIM" id="222900">
    <property type="type" value="phenotype"/>
</dbReference>
<dbReference type="MIM" id="609845">
    <property type="type" value="gene"/>
</dbReference>
<dbReference type="neXtProt" id="NX_P14410"/>
<dbReference type="OpenTargets" id="ENSG00000090402"/>
<dbReference type="Orphanet" id="35122">
    <property type="disease" value="Congenital sucrase-isomaltase deficiency"/>
</dbReference>
<dbReference type="PharmGKB" id="PA35758"/>
<dbReference type="VEuPathDB" id="HostDB:ENSG00000090402"/>
<dbReference type="eggNOG" id="KOG1065">
    <property type="taxonomic scope" value="Eukaryota"/>
</dbReference>
<dbReference type="GeneTree" id="ENSGT00940000161633"/>
<dbReference type="HOGENOM" id="CLU_000631_3_1_1"/>
<dbReference type="InParanoid" id="P14410"/>
<dbReference type="OMA" id="AQHVWIN"/>
<dbReference type="PAN-GO" id="P14410">
    <property type="GO annotations" value="1 GO annotation based on evolutionary models"/>
</dbReference>
<dbReference type="PhylomeDB" id="P14410"/>
<dbReference type="TreeFam" id="TF314577"/>
<dbReference type="BioCyc" id="MetaCyc:HS01688-MONOMER"/>
<dbReference type="BRENDA" id="3.2.1.10">
    <property type="organism ID" value="2681"/>
</dbReference>
<dbReference type="BRENDA" id="3.2.1.48">
    <property type="organism ID" value="2681"/>
</dbReference>
<dbReference type="PathwayCommons" id="P14410"/>
<dbReference type="Reactome" id="R-HSA-189085">
    <property type="pathway name" value="Digestion of dietary carbohydrate"/>
</dbReference>
<dbReference type="Reactome" id="R-HSA-5659898">
    <property type="pathway name" value="Intestinal saccharidase deficiencies"/>
</dbReference>
<dbReference type="SignaLink" id="P14410"/>
<dbReference type="SIGNOR" id="P14410"/>
<dbReference type="BioGRID-ORCS" id="6476">
    <property type="hits" value="10 hits in 1154 CRISPR screens"/>
</dbReference>
<dbReference type="ChiTaRS" id="SI">
    <property type="organism name" value="human"/>
</dbReference>
<dbReference type="EvolutionaryTrace" id="P14410"/>
<dbReference type="GenomeRNAi" id="6476"/>
<dbReference type="Pharos" id="P14410">
    <property type="development level" value="Tchem"/>
</dbReference>
<dbReference type="PRO" id="PR:P14410"/>
<dbReference type="Proteomes" id="UP000005640">
    <property type="component" value="Chromosome 3"/>
</dbReference>
<dbReference type="RNAct" id="P14410">
    <property type="molecule type" value="protein"/>
</dbReference>
<dbReference type="Bgee" id="ENSG00000090402">
    <property type="expression patterns" value="Expressed in jejunal mucosa and 48 other cell types or tissues"/>
</dbReference>
<dbReference type="ExpressionAtlas" id="P14410">
    <property type="expression patterns" value="baseline and differential"/>
</dbReference>
<dbReference type="GO" id="GO:0016324">
    <property type="term" value="C:apical plasma membrane"/>
    <property type="evidence" value="ECO:0007669"/>
    <property type="project" value="UniProtKB-SubCell"/>
</dbReference>
<dbReference type="GO" id="GO:0005903">
    <property type="term" value="C:brush border"/>
    <property type="evidence" value="ECO:0000304"/>
    <property type="project" value="ProtInc"/>
</dbReference>
<dbReference type="GO" id="GO:0070062">
    <property type="term" value="C:extracellular exosome"/>
    <property type="evidence" value="ECO:0007005"/>
    <property type="project" value="UniProtKB"/>
</dbReference>
<dbReference type="GO" id="GO:0005794">
    <property type="term" value="C:Golgi apparatus"/>
    <property type="evidence" value="ECO:0000304"/>
    <property type="project" value="ProtInc"/>
</dbReference>
<dbReference type="GO" id="GO:0005886">
    <property type="term" value="C:plasma membrane"/>
    <property type="evidence" value="ECO:0000304"/>
    <property type="project" value="Reactome"/>
</dbReference>
<dbReference type="GO" id="GO:0004558">
    <property type="term" value="F:alpha-1,4-glucosidase activity"/>
    <property type="evidence" value="ECO:0000318"/>
    <property type="project" value="GO_Central"/>
</dbReference>
<dbReference type="GO" id="GO:0030246">
    <property type="term" value="F:carbohydrate binding"/>
    <property type="evidence" value="ECO:0007669"/>
    <property type="project" value="InterPro"/>
</dbReference>
<dbReference type="GO" id="GO:0004574">
    <property type="term" value="F:oligo-1,6-glucosidase activity"/>
    <property type="evidence" value="ECO:0000314"/>
    <property type="project" value="UniProtKB"/>
</dbReference>
<dbReference type="GO" id="GO:0004575">
    <property type="term" value="F:sucrose alpha-glucosidase activity"/>
    <property type="evidence" value="ECO:0000304"/>
    <property type="project" value="Reactome"/>
</dbReference>
<dbReference type="GO" id="GO:0044245">
    <property type="term" value="P:polysaccharide digestion"/>
    <property type="evidence" value="ECO:0000304"/>
    <property type="project" value="Reactome"/>
</dbReference>
<dbReference type="GO" id="GO:0005987">
    <property type="term" value="P:sucrose catabolic process"/>
    <property type="evidence" value="ECO:0000314"/>
    <property type="project" value="UniProtKB"/>
</dbReference>
<dbReference type="CDD" id="cd06602">
    <property type="entry name" value="GH31_MGAM_SI_GAA"/>
    <property type="match status" value="2"/>
</dbReference>
<dbReference type="CDD" id="cd14752">
    <property type="entry name" value="GH31_N"/>
    <property type="match status" value="2"/>
</dbReference>
<dbReference type="CDD" id="cd00111">
    <property type="entry name" value="Trefoil"/>
    <property type="match status" value="2"/>
</dbReference>
<dbReference type="FunFam" id="2.60.40.1180:FF:000001">
    <property type="entry name" value="Maltase-glucoamylase, intestinal"/>
    <property type="match status" value="2"/>
</dbReference>
<dbReference type="FunFam" id="2.60.40.1180:FF:000005">
    <property type="entry name" value="Maltase-glucoamylase, intestinal"/>
    <property type="match status" value="2"/>
</dbReference>
<dbReference type="FunFam" id="2.60.40.1760:FF:000001">
    <property type="entry name" value="Maltase-glucoamylase, intestinal"/>
    <property type="match status" value="2"/>
</dbReference>
<dbReference type="FunFam" id="3.20.20.80:FF:000016">
    <property type="entry name" value="Maltase-glucoamylase, intestinal"/>
    <property type="match status" value="2"/>
</dbReference>
<dbReference type="FunFam" id="4.10.110.10:FF:000003">
    <property type="entry name" value="Maltase-glucoamylase, intestinal"/>
    <property type="match status" value="1"/>
</dbReference>
<dbReference type="Gene3D" id="3.20.20.80">
    <property type="entry name" value="Glycosidases"/>
    <property type="match status" value="2"/>
</dbReference>
<dbReference type="Gene3D" id="2.60.40.1760">
    <property type="entry name" value="glycosyl hydrolase (family 31)"/>
    <property type="match status" value="2"/>
</dbReference>
<dbReference type="Gene3D" id="2.60.40.1180">
    <property type="entry name" value="Golgi alpha-mannosidase II"/>
    <property type="match status" value="4"/>
</dbReference>
<dbReference type="Gene3D" id="4.10.110.10">
    <property type="entry name" value="Spasmolytic Protein, domain 1"/>
    <property type="match status" value="2"/>
</dbReference>
<dbReference type="InterPro" id="IPR011013">
    <property type="entry name" value="Gal_mutarotase_sf_dom"/>
</dbReference>
<dbReference type="InterPro" id="IPR030458">
    <property type="entry name" value="Glyco_hydro_31_AS"/>
</dbReference>
<dbReference type="InterPro" id="IPR048395">
    <property type="entry name" value="Glyco_hydro_31_C"/>
</dbReference>
<dbReference type="InterPro" id="IPR030459">
    <property type="entry name" value="Glyco_hydro_31_CS"/>
</dbReference>
<dbReference type="InterPro" id="IPR025887">
    <property type="entry name" value="Glyco_hydro_31_N_dom"/>
</dbReference>
<dbReference type="InterPro" id="IPR000322">
    <property type="entry name" value="Glyco_hydro_31_TIM"/>
</dbReference>
<dbReference type="InterPro" id="IPR013780">
    <property type="entry name" value="Glyco_hydro_b"/>
</dbReference>
<dbReference type="InterPro" id="IPR017853">
    <property type="entry name" value="Glycoside_hydrolase_SF"/>
</dbReference>
<dbReference type="InterPro" id="IPR017957">
    <property type="entry name" value="P_trefoil_CS"/>
</dbReference>
<dbReference type="InterPro" id="IPR000519">
    <property type="entry name" value="P_trefoil_dom"/>
</dbReference>
<dbReference type="InterPro" id="IPR044913">
    <property type="entry name" value="P_trefoil_dom_sf"/>
</dbReference>
<dbReference type="PANTHER" id="PTHR22762">
    <property type="entry name" value="ALPHA-GLUCOSIDASE"/>
    <property type="match status" value="1"/>
</dbReference>
<dbReference type="PANTHER" id="PTHR22762:SF133">
    <property type="entry name" value="P-TYPE DOMAIN-CONTAINING PROTEIN"/>
    <property type="match status" value="1"/>
</dbReference>
<dbReference type="Pfam" id="PF13802">
    <property type="entry name" value="Gal_mutarotas_2"/>
    <property type="match status" value="2"/>
</dbReference>
<dbReference type="Pfam" id="PF01055">
    <property type="entry name" value="Glyco_hydro_31_2nd"/>
    <property type="match status" value="2"/>
</dbReference>
<dbReference type="Pfam" id="PF21365">
    <property type="entry name" value="Glyco_hydro_31_3rd"/>
    <property type="match status" value="2"/>
</dbReference>
<dbReference type="Pfam" id="PF00088">
    <property type="entry name" value="Trefoil"/>
    <property type="match status" value="2"/>
</dbReference>
<dbReference type="SMART" id="SM00018">
    <property type="entry name" value="PD"/>
    <property type="match status" value="2"/>
</dbReference>
<dbReference type="SUPFAM" id="SSF51445">
    <property type="entry name" value="(Trans)glycosidases"/>
    <property type="match status" value="2"/>
</dbReference>
<dbReference type="SUPFAM" id="SSF74650">
    <property type="entry name" value="Galactose mutarotase-like"/>
    <property type="match status" value="2"/>
</dbReference>
<dbReference type="SUPFAM" id="SSF51011">
    <property type="entry name" value="Glycosyl hydrolase domain"/>
    <property type="match status" value="2"/>
</dbReference>
<dbReference type="SUPFAM" id="SSF57492">
    <property type="entry name" value="Trefoil"/>
    <property type="match status" value="1"/>
</dbReference>
<dbReference type="PROSITE" id="PS00129">
    <property type="entry name" value="GLYCOSYL_HYDROL_F31_1"/>
    <property type="match status" value="2"/>
</dbReference>
<dbReference type="PROSITE" id="PS00707">
    <property type="entry name" value="GLYCOSYL_HYDROL_F31_2"/>
    <property type="match status" value="2"/>
</dbReference>
<dbReference type="PROSITE" id="PS00025">
    <property type="entry name" value="P_TREFOIL_1"/>
    <property type="match status" value="1"/>
</dbReference>
<dbReference type="PROSITE" id="PS51448">
    <property type="entry name" value="P_TREFOIL_2"/>
    <property type="match status" value="2"/>
</dbReference>
<accession>P14410</accession>
<accession>A2RUC3</accession>
<accession>Q1JQ80</accession>
<accession>Q1RMC2</accession>
<reference key="1">
    <citation type="journal article" date="1992" name="Biochem. J.">
        <title>Sequence of the complete cDNA and the 5' structure of the human sucrase-isomaltase gene. Possible homology with a yeast glucoamylase.</title>
        <authorList>
            <person name="Chantret I."/>
            <person name="Lacasa M."/>
            <person name="Chevalier G."/>
            <person name="Ruf J."/>
            <person name="Islam I."/>
            <person name="Mantei N."/>
            <person name="Edwards Y."/>
            <person name="Swallow D."/>
            <person name="Rousset M."/>
        </authorList>
    </citation>
    <scope>NUCLEOTIDE SEQUENCE [MRNA]</scope>
    <scope>VARIANTS ALA-231 AND ILE-1523</scope>
    <source>
        <tissue>Intestine</tissue>
    </source>
</reference>
<reference key="2">
    <citation type="journal article" date="2006" name="Nature">
        <title>The DNA sequence, annotation and analysis of human chromosome 3.</title>
        <authorList>
            <person name="Muzny D.M."/>
            <person name="Scherer S.E."/>
            <person name="Kaul R."/>
            <person name="Wang J."/>
            <person name="Yu J."/>
            <person name="Sudbrak R."/>
            <person name="Buhay C.J."/>
            <person name="Chen R."/>
            <person name="Cree A."/>
            <person name="Ding Y."/>
            <person name="Dugan-Rocha S."/>
            <person name="Gill R."/>
            <person name="Gunaratne P."/>
            <person name="Harris R.A."/>
            <person name="Hawes A.C."/>
            <person name="Hernandez J."/>
            <person name="Hodgson A.V."/>
            <person name="Hume J."/>
            <person name="Jackson A."/>
            <person name="Khan Z.M."/>
            <person name="Kovar-Smith C."/>
            <person name="Lewis L.R."/>
            <person name="Lozado R.J."/>
            <person name="Metzker M.L."/>
            <person name="Milosavljevic A."/>
            <person name="Miner G.R."/>
            <person name="Morgan M.B."/>
            <person name="Nazareth L.V."/>
            <person name="Scott G."/>
            <person name="Sodergren E."/>
            <person name="Song X.-Z."/>
            <person name="Steffen D."/>
            <person name="Wei S."/>
            <person name="Wheeler D.A."/>
            <person name="Wright M.W."/>
            <person name="Worley K.C."/>
            <person name="Yuan Y."/>
            <person name="Zhang Z."/>
            <person name="Adams C.Q."/>
            <person name="Ansari-Lari M.A."/>
            <person name="Ayele M."/>
            <person name="Brown M.J."/>
            <person name="Chen G."/>
            <person name="Chen Z."/>
            <person name="Clendenning J."/>
            <person name="Clerc-Blankenburg K.P."/>
            <person name="Chen R."/>
            <person name="Chen Z."/>
            <person name="Davis C."/>
            <person name="Delgado O."/>
            <person name="Dinh H.H."/>
            <person name="Dong W."/>
            <person name="Draper H."/>
            <person name="Ernst S."/>
            <person name="Fu G."/>
            <person name="Gonzalez-Garay M.L."/>
            <person name="Garcia D.K."/>
            <person name="Gillett W."/>
            <person name="Gu J."/>
            <person name="Hao B."/>
            <person name="Haugen E."/>
            <person name="Havlak P."/>
            <person name="He X."/>
            <person name="Hennig S."/>
            <person name="Hu S."/>
            <person name="Huang W."/>
            <person name="Jackson L.R."/>
            <person name="Jacob L.S."/>
            <person name="Kelly S.H."/>
            <person name="Kube M."/>
            <person name="Levy R."/>
            <person name="Li Z."/>
            <person name="Liu B."/>
            <person name="Liu J."/>
            <person name="Liu W."/>
            <person name="Lu J."/>
            <person name="Maheshwari M."/>
            <person name="Nguyen B.-V."/>
            <person name="Okwuonu G.O."/>
            <person name="Palmeiri A."/>
            <person name="Pasternak S."/>
            <person name="Perez L.M."/>
            <person name="Phelps K.A."/>
            <person name="Plopper F.J."/>
            <person name="Qiang B."/>
            <person name="Raymond C."/>
            <person name="Rodriguez R."/>
            <person name="Saenphimmachak C."/>
            <person name="Santibanez J."/>
            <person name="Shen H."/>
            <person name="Shen Y."/>
            <person name="Subramanian S."/>
            <person name="Tabor P.E."/>
            <person name="Verduzco D."/>
            <person name="Waldron L."/>
            <person name="Wang J."/>
            <person name="Wang J."/>
            <person name="Wang Q."/>
            <person name="Williams G.A."/>
            <person name="Wong G.K.-S."/>
            <person name="Yao Z."/>
            <person name="Zhang J."/>
            <person name="Zhang X."/>
            <person name="Zhao G."/>
            <person name="Zhou J."/>
            <person name="Zhou Y."/>
            <person name="Nelson D."/>
            <person name="Lehrach H."/>
            <person name="Reinhardt R."/>
            <person name="Naylor S.L."/>
            <person name="Yang H."/>
            <person name="Olson M."/>
            <person name="Weinstock G."/>
            <person name="Gibbs R.A."/>
        </authorList>
    </citation>
    <scope>NUCLEOTIDE SEQUENCE [LARGE SCALE GENOMIC DNA]</scope>
</reference>
<reference key="3">
    <citation type="journal article" date="2004" name="Genome Res.">
        <title>The status, quality, and expansion of the NIH full-length cDNA project: the Mammalian Gene Collection (MGC).</title>
        <authorList>
            <consortium name="The MGC Project Team"/>
        </authorList>
    </citation>
    <scope>NUCLEOTIDE SEQUENCE [LARGE SCALE MRNA]</scope>
    <scope>VARIANTS PHE-15; ALA-231 AND ILE-1523</scope>
</reference>
<reference key="4">
    <citation type="journal article" date="1987" name="Gene">
        <title>Isolation of a cDNA probe for a human jejunal brush-border hydrolase, sucrase-isomaltase, and assignment of the gene locus to chromosome 3.</title>
        <authorList>
            <person name="Green F."/>
            <person name="Edwards Y."/>
            <person name="Hauri H.-P."/>
            <person name="Povey S."/>
            <person name="Ho M.W."/>
            <person name="Pinto M."/>
            <person name="Swallow D."/>
        </authorList>
    </citation>
    <scope>NUCLEOTIDE SEQUENCE [MRNA] OF 1-679</scope>
    <scope>VARIANT ALA-231</scope>
</reference>
<reference key="5">
    <citation type="journal article" date="1991" name="Gastroenterology">
        <title>Expression of sucrase-isomaltase and dipeptidylpeptidase IV in human small intestine and colon.</title>
        <authorList>
            <person name="Gorvel J.P."/>
            <person name="Ferrero A."/>
            <person name="Chambraud L."/>
            <person name="Rigal A."/>
            <person name="Bonicel J."/>
            <person name="Maroux S."/>
        </authorList>
    </citation>
    <scope>PROTEIN SEQUENCE OF 2-20 AND 1008-1024</scope>
    <scope>TISSUE SPECIFICITY</scope>
    <scope>VARIANT PHE-15</scope>
</reference>
<reference key="6">
    <citation type="journal article" date="1995" name="Eur. J. Biochem.">
        <title>Phosphorylation of the N-terminal intracellular tail of sucrase-isomaltase by cAMP-dependent protein kinase.</title>
        <authorList>
            <person name="Keller P."/>
            <person name="Semenza G."/>
            <person name="Shaltiel S."/>
        </authorList>
    </citation>
    <scope>PHOSPHORYLATION AT SER-7</scope>
</reference>
<reference key="7">
    <citation type="journal article" date="2010" name="J. Biol. Chem.">
        <title>Structural basis for substrate selectivity in human maltase-glucoamylase and sucrase-isomaltase N-terminal domains.</title>
        <authorList>
            <person name="Sim L."/>
            <person name="Willemsma C."/>
            <person name="Mohan S."/>
            <person name="Naim H.Y."/>
            <person name="Pinto B.M."/>
            <person name="Rose D.R."/>
        </authorList>
    </citation>
    <scope>X-RAY CRYSTALLOGRAPHY (2.15 ANGSTROMS) OF 62-931 ALONE AND IN COMPLEX WITH INHIBITOR</scope>
    <scope>GLYCOSYLATION AT ASN-99; ASN-455; ASN-855 AND ASN-904</scope>
    <scope>FUNCTION</scope>
    <scope>ACTIVE SITE</scope>
    <scope>SUBSTRATE-BINDING SITES</scope>
    <scope>DISULFIDE BONDS</scope>
</reference>
<reference key="8">
    <citation type="journal article" date="1996" name="J. Clin. Invest.">
        <title>Congenital sucrase-isomaltase deficiency: identification of a glutamine to proline substitution that leads to a transport block of sucrase-isomaltase in a pre-Golgi compartment.</title>
        <authorList>
            <person name="Ouwendijk J."/>
            <person name="Moolenaar C.E.C."/>
            <person name="Peters W.J."/>
            <person name="Hollenberg C.P."/>
            <person name="Ginsel L.A."/>
            <person name="Fransen J.A.M."/>
            <person name="Naim H.Y."/>
        </authorList>
    </citation>
    <scope>VARIANT CSID PRO-1098</scope>
</reference>
<reference key="9">
    <citation type="journal article" date="2000" name="J. Clin. Invest.">
        <title>Congenital sucrase-isomaltase deficiency arising from cleavage and secretion of a mutant form of the enzyme.</title>
        <authorList>
            <person name="Jacob R."/>
            <person name="Zimmer K.P."/>
            <person name="Schmitz J."/>
            <person name="Naim H.Y."/>
        </authorList>
    </citation>
    <scope>VARIANT CSID PRO-341</scope>
    <scope>CHARACTERIZATION OF VARIANT CSID PRO-341</scope>
</reference>
<reference key="10">
    <citation type="journal article" date="2001" name="J. Biol. Chem.">
        <title>Molecular basis of aberrant apical protein transport in an intestinal enzyme disorder.</title>
        <authorList>
            <person name="Spodsberg N."/>
            <person name="Jacob R."/>
            <person name="Alfalah M."/>
            <person name="Zimmer K.P."/>
            <person name="Naim H.Y."/>
        </authorList>
    </citation>
    <scope>VARIANT CSID ARG-117</scope>
    <scope>CHARACTERIZATION OF VARIANT CSID ARG-117</scope>
</reference>
<reference key="11">
    <citation type="journal article" date="2003" name="Gastroenterology">
        <title>Congenital sucrase-isomaltase deficiency because of an accumulation of the mutant enzyme in the endoplasmic reticulum.</title>
        <authorList>
            <person name="Ritz V."/>
            <person name="Alfalah M."/>
            <person name="Zimmer K.P."/>
            <person name="Schmitz J."/>
            <person name="Jacob R."/>
            <person name="Naim H.Y."/>
        </authorList>
    </citation>
    <scope>VARIANTS PHE-15 AND ALA-231</scope>
    <scope>VARIANT CSID PRO-620</scope>
</reference>
<reference key="12">
    <citation type="journal article" date="2006" name="Hum. Mutat.">
        <title>Novel mutations in the human sucrase-isomaltase gene (SI) that cause congenital carbohydrate malabsorption.</title>
        <authorList>
            <person name="Sander P."/>
            <person name="Alfalah M."/>
            <person name="Keiser M."/>
            <person name="Korponay-Szabo I."/>
            <person name="Kovacs J.B."/>
            <person name="Leeb T."/>
            <person name="Naim H.Y."/>
        </authorList>
    </citation>
    <scope>VARIANTS CSID GLY-577; PRO-594; PRO-694; ASP-1073; TYR-1229; GLY-1367 AND CYS-1745</scope>
    <scope>VARIANTS PHE-15; ALA-231 AND ILE-1523</scope>
</reference>
<comment type="function">
    <text evidence="13">Plays an important role in the final stage of carbohydrate digestion. Isomaltase activity is specific for both alpha-1,4- and alpha-1,6-oligosaccharides.</text>
</comment>
<comment type="catalytic activity">
    <reaction>
        <text>Hydrolysis of sucrose and maltose by an alpha-D-glucosidase-type action.</text>
        <dbReference type="EC" id="3.2.1.48"/>
    </reaction>
</comment>
<comment type="catalytic activity">
    <reaction>
        <text>Hydrolysis of (1-&gt;6)-alpha-D-glucosidic linkages in some oligosaccharides produced from starch and glycogen by alpha-amylase, and in isomaltose.</text>
        <dbReference type="EC" id="3.2.1.10"/>
    </reaction>
</comment>
<comment type="subunit">
    <text evidence="13">The resulting sucrase and isomaltase subunits stay associated with one another in a complex by non-covalent linkages.</text>
</comment>
<comment type="interaction">
    <interactant intactId="EBI-20801949">
        <id>P14410</id>
    </interactant>
    <interactant intactId="EBI-2829774">
        <id>O43451</id>
        <label>MGAM</label>
    </interactant>
    <organismsDiffer>false</organismsDiffer>
    <experiments>2</experiments>
</comment>
<comment type="subcellular location">
    <subcellularLocation>
        <location>Apical cell membrane</location>
        <topology>Single-pass type II membrane protein</topology>
    </subcellularLocation>
    <text>Brush border.</text>
</comment>
<comment type="tissue specificity">
    <text evidence="12">Expressed in the poorly differentiated crypt cells of the small intestine as well as in the mature villous cells. Expressed at very low levels in the colon.</text>
</comment>
<comment type="PTM">
    <text>The precursor is proteolytically cleaved when exposed to pancreatic proteases in the intestinal lumen.</text>
</comment>
<comment type="PTM">
    <text evidence="1">Sulfated.</text>
</comment>
<comment type="disease" evidence="6 7 9 11 16">
    <disease id="DI-01419">
        <name>Congenital sucrase-isomaltase deficiency</name>
        <acronym>CSID</acronym>
        <description>Autosomal recessive intestinal disorder that is clinically characterized by fermentative diarrhea, abdominal pain, and cramps upon ingestion of sugar. The symptoms are the consequence of absent or drastically reduced enzymatic activities of sucrase and isomaltase. The prevalence of CSID is 0.02 % in individuals of European descent and appears to be much higher in Greenland, Alaskan, and Canadian native people. CSID arises due to post-translational perturbations in the intracellular transport, polarized sorting, aberrant processing, and defective function of SI.</description>
        <dbReference type="MIM" id="222900"/>
    </disease>
    <text>The disease is caused by variants affecting the gene represented in this entry.</text>
</comment>
<comment type="miscellaneous">
    <text>There is a high degree of homology between the isomaltase and sucrase portions (41% of amino acid identity) indicating that this protein is evolved by partial gene duplication.</text>
</comment>
<comment type="similarity">
    <text evidence="17">Belongs to the glycosyl hydrolase 31 family.</text>
</comment>
<name>SUIS_HUMAN</name>